<comment type="function">
    <text evidence="1">Catalyzes the hydrolysis of the amide bond of N(2)-acetylated L-amino acids. Cleaves the acetyl group from N-acetyl-L-ornithine to form L-ornithine, an intermediate in L-arginine biosynthesis pathway, and a branchpoint in the synthesis of polyamines.</text>
</comment>
<comment type="catalytic activity">
    <reaction evidence="1">
        <text>N(2)-acetyl-L-ornithine + H2O = L-ornithine + acetate</text>
        <dbReference type="Rhea" id="RHEA:15941"/>
        <dbReference type="ChEBI" id="CHEBI:15377"/>
        <dbReference type="ChEBI" id="CHEBI:30089"/>
        <dbReference type="ChEBI" id="CHEBI:46911"/>
        <dbReference type="ChEBI" id="CHEBI:57805"/>
        <dbReference type="EC" id="3.5.1.16"/>
    </reaction>
</comment>
<comment type="cofactor">
    <cofactor evidence="1">
        <name>Zn(2+)</name>
        <dbReference type="ChEBI" id="CHEBI:29105"/>
    </cofactor>
    <cofactor evidence="1">
        <name>Co(2+)</name>
        <dbReference type="ChEBI" id="CHEBI:48828"/>
    </cofactor>
    <text evidence="1">Binds 2 Zn(2+) or Co(2+) ions per subunit.</text>
</comment>
<comment type="cofactor">
    <cofactor evidence="1">
        <name>glutathione</name>
        <dbReference type="ChEBI" id="CHEBI:57925"/>
    </cofactor>
</comment>
<comment type="pathway">
    <text evidence="1">Amino-acid biosynthesis; L-arginine biosynthesis; L-ornithine from N(2)-acetyl-L-ornithine (linear): step 1/1.</text>
</comment>
<comment type="subunit">
    <text evidence="1">Homodimer.</text>
</comment>
<comment type="subcellular location">
    <subcellularLocation>
        <location evidence="1">Cytoplasm</location>
    </subcellularLocation>
</comment>
<comment type="similarity">
    <text evidence="1">Belongs to the peptidase M20A family. ArgE subfamily.</text>
</comment>
<feature type="chain" id="PRO_1000065059" description="Acetylornithine deacetylase">
    <location>
        <begin position="1"/>
        <end position="383"/>
    </location>
</feature>
<feature type="active site" evidence="1">
    <location>
        <position position="82"/>
    </location>
</feature>
<feature type="active site" evidence="1">
    <location>
        <position position="144"/>
    </location>
</feature>
<feature type="binding site" evidence="1">
    <location>
        <position position="80"/>
    </location>
    <ligand>
        <name>Zn(2+)</name>
        <dbReference type="ChEBI" id="CHEBI:29105"/>
        <label>1</label>
    </ligand>
</feature>
<feature type="binding site" evidence="1">
    <location>
        <position position="112"/>
    </location>
    <ligand>
        <name>Zn(2+)</name>
        <dbReference type="ChEBI" id="CHEBI:29105"/>
        <label>1</label>
    </ligand>
</feature>
<feature type="binding site" evidence="1">
    <location>
        <position position="112"/>
    </location>
    <ligand>
        <name>Zn(2+)</name>
        <dbReference type="ChEBI" id="CHEBI:29105"/>
        <label>2</label>
    </ligand>
</feature>
<feature type="binding site" evidence="1">
    <location>
        <position position="145"/>
    </location>
    <ligand>
        <name>Zn(2+)</name>
        <dbReference type="ChEBI" id="CHEBI:29105"/>
        <label>2</label>
    </ligand>
</feature>
<feature type="binding site" evidence="1">
    <location>
        <position position="169"/>
    </location>
    <ligand>
        <name>Zn(2+)</name>
        <dbReference type="ChEBI" id="CHEBI:29105"/>
        <label>1</label>
    </ligand>
</feature>
<feature type="binding site" evidence="1">
    <location>
        <position position="355"/>
    </location>
    <ligand>
        <name>Zn(2+)</name>
        <dbReference type="ChEBI" id="CHEBI:29105"/>
        <label>2</label>
    </ligand>
</feature>
<gene>
    <name evidence="1" type="primary">argE</name>
    <name type="ordered locus">SCH_4010</name>
</gene>
<evidence type="ECO:0000255" key="1">
    <source>
        <dbReference type="HAMAP-Rule" id="MF_01108"/>
    </source>
</evidence>
<protein>
    <recommendedName>
        <fullName evidence="1">Acetylornithine deacetylase</fullName>
        <shortName evidence="1">AO</shortName>
        <shortName evidence="1">Acetylornithinase</shortName>
        <ecNumber evidence="1">3.5.1.16</ecNumber>
    </recommendedName>
    <alternativeName>
        <fullName evidence="1">N-acetylornithinase</fullName>
        <shortName evidence="1">NAO</shortName>
    </alternativeName>
</protein>
<dbReference type="EC" id="3.5.1.16" evidence="1"/>
<dbReference type="EMBL" id="AE017220">
    <property type="protein sequence ID" value="AAX67916.1"/>
    <property type="molecule type" value="Genomic_DNA"/>
</dbReference>
<dbReference type="RefSeq" id="WP_000800208.1">
    <property type="nucleotide sequence ID" value="NC_006905.1"/>
</dbReference>
<dbReference type="SMR" id="Q57H96"/>
<dbReference type="MEROPS" id="M20.974"/>
<dbReference type="KEGG" id="sec:SCH_4010"/>
<dbReference type="HOGENOM" id="CLU_021802_2_4_6"/>
<dbReference type="UniPathway" id="UPA00068">
    <property type="reaction ID" value="UER00110"/>
</dbReference>
<dbReference type="Proteomes" id="UP000000538">
    <property type="component" value="Chromosome"/>
</dbReference>
<dbReference type="GO" id="GO:0005737">
    <property type="term" value="C:cytoplasm"/>
    <property type="evidence" value="ECO:0007669"/>
    <property type="project" value="UniProtKB-SubCell"/>
</dbReference>
<dbReference type="GO" id="GO:0008777">
    <property type="term" value="F:acetylornithine deacetylase activity"/>
    <property type="evidence" value="ECO:0007669"/>
    <property type="project" value="UniProtKB-UniRule"/>
</dbReference>
<dbReference type="GO" id="GO:0008270">
    <property type="term" value="F:zinc ion binding"/>
    <property type="evidence" value="ECO:0007669"/>
    <property type="project" value="UniProtKB-UniRule"/>
</dbReference>
<dbReference type="GO" id="GO:0006526">
    <property type="term" value="P:L-arginine biosynthetic process"/>
    <property type="evidence" value="ECO:0007669"/>
    <property type="project" value="UniProtKB-UniRule"/>
</dbReference>
<dbReference type="CDD" id="cd03894">
    <property type="entry name" value="M20_ArgE"/>
    <property type="match status" value="1"/>
</dbReference>
<dbReference type="FunFam" id="3.30.70.360:FF:000003">
    <property type="entry name" value="Acetylornithine deacetylase"/>
    <property type="match status" value="1"/>
</dbReference>
<dbReference type="Gene3D" id="3.30.70.360">
    <property type="match status" value="1"/>
</dbReference>
<dbReference type="Gene3D" id="3.40.630.10">
    <property type="entry name" value="Zn peptidases"/>
    <property type="match status" value="1"/>
</dbReference>
<dbReference type="HAMAP" id="MF_01108">
    <property type="entry name" value="ArgE"/>
    <property type="match status" value="1"/>
</dbReference>
<dbReference type="InterPro" id="IPR010169">
    <property type="entry name" value="AcOrn-deacetyl"/>
</dbReference>
<dbReference type="InterPro" id="IPR001261">
    <property type="entry name" value="ArgE/DapE_CS"/>
</dbReference>
<dbReference type="InterPro" id="IPR036264">
    <property type="entry name" value="Bact_exopeptidase_dim_dom"/>
</dbReference>
<dbReference type="InterPro" id="IPR002933">
    <property type="entry name" value="Peptidase_M20"/>
</dbReference>
<dbReference type="InterPro" id="IPR011650">
    <property type="entry name" value="Peptidase_M20_dimer"/>
</dbReference>
<dbReference type="InterPro" id="IPR050072">
    <property type="entry name" value="Peptidase_M20A"/>
</dbReference>
<dbReference type="NCBIfam" id="TIGR01892">
    <property type="entry name" value="AcOrn-deacetyl"/>
    <property type="match status" value="1"/>
</dbReference>
<dbReference type="NCBIfam" id="NF003474">
    <property type="entry name" value="PRK05111.1"/>
    <property type="match status" value="1"/>
</dbReference>
<dbReference type="PANTHER" id="PTHR43808">
    <property type="entry name" value="ACETYLORNITHINE DEACETYLASE"/>
    <property type="match status" value="1"/>
</dbReference>
<dbReference type="PANTHER" id="PTHR43808:SF1">
    <property type="entry name" value="ACETYLORNITHINE DEACETYLASE"/>
    <property type="match status" value="1"/>
</dbReference>
<dbReference type="Pfam" id="PF07687">
    <property type="entry name" value="M20_dimer"/>
    <property type="match status" value="1"/>
</dbReference>
<dbReference type="Pfam" id="PF01546">
    <property type="entry name" value="Peptidase_M20"/>
    <property type="match status" value="1"/>
</dbReference>
<dbReference type="SUPFAM" id="SSF55031">
    <property type="entry name" value="Bacterial exopeptidase dimerisation domain"/>
    <property type="match status" value="1"/>
</dbReference>
<dbReference type="SUPFAM" id="SSF53187">
    <property type="entry name" value="Zn-dependent exopeptidases"/>
    <property type="match status" value="1"/>
</dbReference>
<dbReference type="PROSITE" id="PS00758">
    <property type="entry name" value="ARGE_DAPE_CPG2_1"/>
    <property type="match status" value="1"/>
</dbReference>
<dbReference type="PROSITE" id="PS00759">
    <property type="entry name" value="ARGE_DAPE_CPG2_2"/>
    <property type="match status" value="1"/>
</dbReference>
<name>ARGE_SALCH</name>
<proteinExistence type="inferred from homology"/>
<reference key="1">
    <citation type="journal article" date="2005" name="Nucleic Acids Res.">
        <title>The genome sequence of Salmonella enterica serovar Choleraesuis, a highly invasive and resistant zoonotic pathogen.</title>
        <authorList>
            <person name="Chiu C.-H."/>
            <person name="Tang P."/>
            <person name="Chu C."/>
            <person name="Hu S."/>
            <person name="Bao Q."/>
            <person name="Yu J."/>
            <person name="Chou Y.-Y."/>
            <person name="Wang H.-S."/>
            <person name="Lee Y.-S."/>
        </authorList>
    </citation>
    <scope>NUCLEOTIDE SEQUENCE [LARGE SCALE GENOMIC DNA]</scope>
    <source>
        <strain>SC-B67</strain>
    </source>
</reference>
<organism>
    <name type="scientific">Salmonella choleraesuis (strain SC-B67)</name>
    <dbReference type="NCBI Taxonomy" id="321314"/>
    <lineage>
        <taxon>Bacteria</taxon>
        <taxon>Pseudomonadati</taxon>
        <taxon>Pseudomonadota</taxon>
        <taxon>Gammaproteobacteria</taxon>
        <taxon>Enterobacterales</taxon>
        <taxon>Enterobacteriaceae</taxon>
        <taxon>Salmonella</taxon>
    </lineage>
</organism>
<sequence length="383" mass="42202">MKNVLPPFIEIYRALIATPSISATEESLDQSNASLITLLAGWFSDLGFNVEVQPVPGTRNKFNMLASTGHGAGGLLLTGHTDTVPFDDGRWTRDPFTLTEHDNKLYGLGTADMKGFFAFILDALRDVDVTKLKKPLYILATADEETSMAGARYFSETTALRPDCAIIGEPTSLQPIRAHKGHISNVVRVLGQSGHSSDPARGVNAIELMHDAIGHIMQLRDSLKARYHYEAFTVPYPTLNLGHIHGGDASNRICACCELHMDIRPLPGMTLNDLNGLLNDALAPVSERWPGRLTVAELHPPIPGYECPPDHQLVEVVEKLLGTKTDVVNYCTEAPFMQTLCPTLVLGPGSINQAHQPDEYLETRFIKPTRELITQVVHHFCWH</sequence>
<keyword id="KW-0028">Amino-acid biosynthesis</keyword>
<keyword id="KW-0055">Arginine biosynthesis</keyword>
<keyword id="KW-0170">Cobalt</keyword>
<keyword id="KW-0963">Cytoplasm</keyword>
<keyword id="KW-0378">Hydrolase</keyword>
<keyword id="KW-0479">Metal-binding</keyword>
<keyword id="KW-0862">Zinc</keyword>
<accession>Q57H96</accession>